<protein>
    <recommendedName>
        <fullName evidence="1">ATP-dependent protease subunit HslV</fullName>
        <ecNumber evidence="1">3.4.25.2</ecNumber>
    </recommendedName>
</protein>
<comment type="function">
    <text evidence="1">Protease subunit of a proteasome-like degradation complex believed to be a general protein degrading machinery.</text>
</comment>
<comment type="catalytic activity">
    <reaction evidence="1">
        <text>ATP-dependent cleavage of peptide bonds with broad specificity.</text>
        <dbReference type="EC" id="3.4.25.2"/>
    </reaction>
</comment>
<comment type="activity regulation">
    <text evidence="1">Allosterically activated by HslU binding.</text>
</comment>
<comment type="subunit">
    <text evidence="1">A double ring-shaped homohexamer of HslV is capped on each side by a ring-shaped HslU homohexamer. The assembly of the HslU/HslV complex is dependent on binding of ATP.</text>
</comment>
<comment type="subcellular location">
    <subcellularLocation>
        <location evidence="1">Cytoplasm</location>
    </subcellularLocation>
</comment>
<comment type="similarity">
    <text evidence="1">Belongs to the peptidase T1B family. HslV subfamily.</text>
</comment>
<accession>Q2FHI5</accession>
<keyword id="KW-0021">Allosteric enzyme</keyword>
<keyword id="KW-0963">Cytoplasm</keyword>
<keyword id="KW-0378">Hydrolase</keyword>
<keyword id="KW-0479">Metal-binding</keyword>
<keyword id="KW-0645">Protease</keyword>
<keyword id="KW-0915">Sodium</keyword>
<keyword id="KW-0888">Threonine protease</keyword>
<name>HSLV_STAA3</name>
<dbReference type="EC" id="3.4.25.2" evidence="1"/>
<dbReference type="EMBL" id="CP000255">
    <property type="protein sequence ID" value="ABD20981.1"/>
    <property type="molecule type" value="Genomic_DNA"/>
</dbReference>
<dbReference type="RefSeq" id="WP_000072681.1">
    <property type="nucleotide sequence ID" value="NZ_CP027476.1"/>
</dbReference>
<dbReference type="SMR" id="Q2FHI5"/>
<dbReference type="MEROPS" id="T01.007"/>
<dbReference type="KEGG" id="saa:SAUSA300_1146"/>
<dbReference type="HOGENOM" id="CLU_093872_1_1_9"/>
<dbReference type="OMA" id="WRTDKML"/>
<dbReference type="Proteomes" id="UP000001939">
    <property type="component" value="Chromosome"/>
</dbReference>
<dbReference type="GO" id="GO:0009376">
    <property type="term" value="C:HslUV protease complex"/>
    <property type="evidence" value="ECO:0007669"/>
    <property type="project" value="UniProtKB-UniRule"/>
</dbReference>
<dbReference type="GO" id="GO:0005839">
    <property type="term" value="C:proteasome core complex"/>
    <property type="evidence" value="ECO:0007669"/>
    <property type="project" value="InterPro"/>
</dbReference>
<dbReference type="GO" id="GO:0046872">
    <property type="term" value="F:metal ion binding"/>
    <property type="evidence" value="ECO:0007669"/>
    <property type="project" value="UniProtKB-KW"/>
</dbReference>
<dbReference type="GO" id="GO:0004298">
    <property type="term" value="F:threonine-type endopeptidase activity"/>
    <property type="evidence" value="ECO:0007669"/>
    <property type="project" value="UniProtKB-KW"/>
</dbReference>
<dbReference type="GO" id="GO:0051603">
    <property type="term" value="P:proteolysis involved in protein catabolic process"/>
    <property type="evidence" value="ECO:0007669"/>
    <property type="project" value="InterPro"/>
</dbReference>
<dbReference type="CDD" id="cd01913">
    <property type="entry name" value="protease_HslV"/>
    <property type="match status" value="1"/>
</dbReference>
<dbReference type="Gene3D" id="3.60.20.10">
    <property type="entry name" value="Glutamine Phosphoribosylpyrophosphate, subunit 1, domain 1"/>
    <property type="match status" value="1"/>
</dbReference>
<dbReference type="HAMAP" id="MF_00248">
    <property type="entry name" value="HslV"/>
    <property type="match status" value="1"/>
</dbReference>
<dbReference type="InterPro" id="IPR022281">
    <property type="entry name" value="ATP-dep_Prtase_HsIV_su"/>
</dbReference>
<dbReference type="InterPro" id="IPR029055">
    <property type="entry name" value="Ntn_hydrolases_N"/>
</dbReference>
<dbReference type="InterPro" id="IPR001353">
    <property type="entry name" value="Proteasome_sua/b"/>
</dbReference>
<dbReference type="InterPro" id="IPR023333">
    <property type="entry name" value="Proteasome_suB-type"/>
</dbReference>
<dbReference type="NCBIfam" id="TIGR03692">
    <property type="entry name" value="ATP_dep_HslV"/>
    <property type="match status" value="1"/>
</dbReference>
<dbReference type="NCBIfam" id="NF003964">
    <property type="entry name" value="PRK05456.1"/>
    <property type="match status" value="1"/>
</dbReference>
<dbReference type="PANTHER" id="PTHR32194:SF0">
    <property type="entry name" value="ATP-DEPENDENT PROTEASE SUBUNIT HSLV"/>
    <property type="match status" value="1"/>
</dbReference>
<dbReference type="PANTHER" id="PTHR32194">
    <property type="entry name" value="METALLOPROTEASE TLDD"/>
    <property type="match status" value="1"/>
</dbReference>
<dbReference type="Pfam" id="PF00227">
    <property type="entry name" value="Proteasome"/>
    <property type="match status" value="1"/>
</dbReference>
<dbReference type="PIRSF" id="PIRSF039093">
    <property type="entry name" value="HslV"/>
    <property type="match status" value="1"/>
</dbReference>
<dbReference type="SUPFAM" id="SSF56235">
    <property type="entry name" value="N-terminal nucleophile aminohydrolases (Ntn hydrolases)"/>
    <property type="match status" value="1"/>
</dbReference>
<dbReference type="PROSITE" id="PS51476">
    <property type="entry name" value="PROTEASOME_BETA_2"/>
    <property type="match status" value="1"/>
</dbReference>
<reference key="1">
    <citation type="journal article" date="2006" name="Lancet">
        <title>Complete genome sequence of USA300, an epidemic clone of community-acquired meticillin-resistant Staphylococcus aureus.</title>
        <authorList>
            <person name="Diep B.A."/>
            <person name="Gill S.R."/>
            <person name="Chang R.F."/>
            <person name="Phan T.H."/>
            <person name="Chen J.H."/>
            <person name="Davidson M.G."/>
            <person name="Lin F."/>
            <person name="Lin J."/>
            <person name="Carleton H.A."/>
            <person name="Mongodin E.F."/>
            <person name="Sensabaugh G.F."/>
            <person name="Perdreau-Remington F."/>
        </authorList>
    </citation>
    <scope>NUCLEOTIDE SEQUENCE [LARGE SCALE GENOMIC DNA]</scope>
    <source>
        <strain>USA300</strain>
    </source>
</reference>
<evidence type="ECO:0000255" key="1">
    <source>
        <dbReference type="HAMAP-Rule" id="MF_00248"/>
    </source>
</evidence>
<feature type="chain" id="PRO_1000012680" description="ATP-dependent protease subunit HslV">
    <location>
        <begin position="1"/>
        <end position="181"/>
    </location>
</feature>
<feature type="active site" evidence="1">
    <location>
        <position position="9"/>
    </location>
</feature>
<feature type="binding site" evidence="1">
    <location>
        <position position="166"/>
    </location>
    <ligand>
        <name>Na(+)</name>
        <dbReference type="ChEBI" id="CHEBI:29101"/>
    </ligand>
</feature>
<feature type="binding site" evidence="1">
    <location>
        <position position="169"/>
    </location>
    <ligand>
        <name>Na(+)</name>
        <dbReference type="ChEBI" id="CHEBI:29101"/>
    </ligand>
</feature>
<feature type="binding site" evidence="1">
    <location>
        <position position="172"/>
    </location>
    <ligand>
        <name>Na(+)</name>
        <dbReference type="ChEBI" id="CHEBI:29101"/>
    </ligand>
</feature>
<sequence length="181" mass="19572">MSNTTLHATTIYAVRHNGKAAMAGDGQVTLGQQVIMKQTARKVRRLYEGKVLAGFAGSVADAFTLFEKFETKLQQFSGNLERAAVELAQEWRGDKQLRQLEAMLIVMDKDAILVVSGTGEVIAPDDDLIAIGSGGNYALSAGRALKRHASHLSAEEMAYESLKVAADICVFTNDNIVVETL</sequence>
<proteinExistence type="inferred from homology"/>
<gene>
    <name evidence="1" type="primary">hslV</name>
    <name type="ordered locus">SAUSA300_1146</name>
</gene>
<organism>
    <name type="scientific">Staphylococcus aureus (strain USA300)</name>
    <dbReference type="NCBI Taxonomy" id="367830"/>
    <lineage>
        <taxon>Bacteria</taxon>
        <taxon>Bacillati</taxon>
        <taxon>Bacillota</taxon>
        <taxon>Bacilli</taxon>
        <taxon>Bacillales</taxon>
        <taxon>Staphylococcaceae</taxon>
        <taxon>Staphylococcus</taxon>
    </lineage>
</organism>